<evidence type="ECO:0000255" key="1">
    <source>
        <dbReference type="HAMAP-Rule" id="MF_00489"/>
    </source>
</evidence>
<organism>
    <name type="scientific">Bradyrhizobium diazoefficiens (strain JCM 10833 / BCRC 13528 / IAM 13628 / NBRC 14792 / USDA 110)</name>
    <dbReference type="NCBI Taxonomy" id="224911"/>
    <lineage>
        <taxon>Bacteria</taxon>
        <taxon>Pseudomonadati</taxon>
        <taxon>Pseudomonadota</taxon>
        <taxon>Alphaproteobacteria</taxon>
        <taxon>Hyphomicrobiales</taxon>
        <taxon>Nitrobacteraceae</taxon>
        <taxon>Bradyrhizobium</taxon>
    </lineage>
</organism>
<feature type="chain" id="PRO_0000175967" description="UPF0178 protein bll3966">
    <location>
        <begin position="1"/>
        <end position="167"/>
    </location>
</feature>
<accession>Q89N76</accession>
<keyword id="KW-1185">Reference proteome</keyword>
<proteinExistence type="inferred from homology"/>
<dbReference type="EMBL" id="BA000040">
    <property type="protein sequence ID" value="BAC49231.1"/>
    <property type="molecule type" value="Genomic_DNA"/>
</dbReference>
<dbReference type="RefSeq" id="NP_770606.1">
    <property type="nucleotide sequence ID" value="NC_004463.1"/>
</dbReference>
<dbReference type="RefSeq" id="WP_011086743.1">
    <property type="nucleotide sequence ID" value="NC_004463.1"/>
</dbReference>
<dbReference type="FunCoup" id="Q89N76">
    <property type="interactions" value="51"/>
</dbReference>
<dbReference type="STRING" id="224911.AAV28_16845"/>
<dbReference type="EnsemblBacteria" id="BAC49231">
    <property type="protein sequence ID" value="BAC49231"/>
    <property type="gene ID" value="BAC49231"/>
</dbReference>
<dbReference type="GeneID" id="46490971"/>
<dbReference type="KEGG" id="bja:bll3966"/>
<dbReference type="PATRIC" id="fig|224911.44.peg.3660"/>
<dbReference type="eggNOG" id="COG1671">
    <property type="taxonomic scope" value="Bacteria"/>
</dbReference>
<dbReference type="HOGENOM" id="CLU_106619_2_1_5"/>
<dbReference type="InParanoid" id="Q89N76"/>
<dbReference type="OrthoDB" id="9798918at2"/>
<dbReference type="PhylomeDB" id="Q89N76"/>
<dbReference type="Proteomes" id="UP000002526">
    <property type="component" value="Chromosome"/>
</dbReference>
<dbReference type="HAMAP" id="MF_00489">
    <property type="entry name" value="UPF0178"/>
    <property type="match status" value="1"/>
</dbReference>
<dbReference type="InterPro" id="IPR003791">
    <property type="entry name" value="UPF0178"/>
</dbReference>
<dbReference type="NCBIfam" id="NF001095">
    <property type="entry name" value="PRK00124.1"/>
    <property type="match status" value="1"/>
</dbReference>
<dbReference type="PANTHER" id="PTHR35146">
    <property type="entry name" value="UPF0178 PROTEIN YAII"/>
    <property type="match status" value="1"/>
</dbReference>
<dbReference type="PANTHER" id="PTHR35146:SF1">
    <property type="entry name" value="UPF0178 PROTEIN YAII"/>
    <property type="match status" value="1"/>
</dbReference>
<dbReference type="Pfam" id="PF02639">
    <property type="entry name" value="DUF188"/>
    <property type="match status" value="1"/>
</dbReference>
<protein>
    <recommendedName>
        <fullName evidence="1">UPF0178 protein bll3966</fullName>
    </recommendedName>
</protein>
<reference key="1">
    <citation type="journal article" date="2002" name="DNA Res.">
        <title>Complete genomic sequence of nitrogen-fixing symbiotic bacterium Bradyrhizobium japonicum USDA110.</title>
        <authorList>
            <person name="Kaneko T."/>
            <person name="Nakamura Y."/>
            <person name="Sato S."/>
            <person name="Minamisawa K."/>
            <person name="Uchiumi T."/>
            <person name="Sasamoto S."/>
            <person name="Watanabe A."/>
            <person name="Idesawa K."/>
            <person name="Iriguchi M."/>
            <person name="Kawashima K."/>
            <person name="Kohara M."/>
            <person name="Matsumoto M."/>
            <person name="Shimpo S."/>
            <person name="Tsuruoka H."/>
            <person name="Wada T."/>
            <person name="Yamada M."/>
            <person name="Tabata S."/>
        </authorList>
    </citation>
    <scope>NUCLEOTIDE SEQUENCE [LARGE SCALE GENOMIC DNA]</scope>
    <source>
        <strain>JCM 10833 / BCRC 13528 / IAM 13628 / NBRC 14792 / USDA 110</strain>
    </source>
</reference>
<gene>
    <name type="ordered locus">bll3966</name>
</gene>
<sequence>MTDTPTRIYVDADACPVKDEIYRVALRHSVPVSVVAGNFIRVPQDPLIERIAAGAGMDAADDWIAERARPGDVVVTSDIPLASRCVKAGADVIAPNGKPFTEQSIGMTLAVRNLMTDLRSAGEVTGGPRSFAPRDRSTFLSALDQTLRRIQRRRIDAAATSQNSSQG</sequence>
<comment type="similarity">
    <text evidence="1">Belongs to the UPF0178 family.</text>
</comment>
<name>Y3966_BRADU</name>